<comment type="function">
    <text evidence="4">Cytokine that may play a role in the development of the medial pallium and during optic nerve and pecten development by modulating BMP signaling.</text>
</comment>
<comment type="subcellular location">
    <subcellularLocation>
        <location evidence="5">Secreted</location>
    </subcellularLocation>
</comment>
<comment type="developmental stage">
    <text evidence="4">In brain first detected at 6 dpc and persisted until 14 dpc. On 10 dpc brain, expressed in the dorsal region of the telencephalic hemispheres and cells located in the ventral diencephalon. On 14 dpc head, expressed in the meninges of the spinal cord. Expressed in the developing optic nerve and at the optic nerve/pecten junction.</text>
</comment>
<comment type="similarity">
    <text evidence="5">Belongs to the DAN family.</text>
</comment>
<accession>O73755</accession>
<proteinExistence type="evidence at transcript level"/>
<protein>
    <recommendedName>
        <fullName>Gremlin-1</fullName>
    </recommendedName>
</protein>
<keyword id="KW-0202">Cytokine</keyword>
<keyword id="KW-1015">Disulfide bond</keyword>
<keyword id="KW-0325">Glycoprotein</keyword>
<keyword id="KW-1185">Reference proteome</keyword>
<keyword id="KW-0964">Secreted</keyword>
<keyword id="KW-0732">Signal</keyword>
<dbReference type="EMBL" id="AF045799">
    <property type="protein sequence ID" value="AAC41280.1"/>
    <property type="molecule type" value="mRNA"/>
</dbReference>
<dbReference type="RefSeq" id="NP_990309.1">
    <property type="nucleotide sequence ID" value="NM_204978.3"/>
</dbReference>
<dbReference type="RefSeq" id="XP_025006359.1">
    <property type="nucleotide sequence ID" value="XM_025150591.3"/>
</dbReference>
<dbReference type="RefSeq" id="XP_046773812.1">
    <property type="nucleotide sequence ID" value="XM_046917856.1"/>
</dbReference>
<dbReference type="SMR" id="O73755"/>
<dbReference type="STRING" id="9031.ENSGALP00000037126"/>
<dbReference type="GlyCosmos" id="O73755">
    <property type="glycosylation" value="1 site, No reported glycans"/>
</dbReference>
<dbReference type="GlyGen" id="O73755">
    <property type="glycosylation" value="1 site"/>
</dbReference>
<dbReference type="PaxDb" id="9031-ENSGALP00000037126"/>
<dbReference type="Ensembl" id="ENSGALT00000133328">
    <property type="protein sequence ID" value="ENSGALP00000095645"/>
    <property type="gene ID" value="ENSGALG00000063719"/>
</dbReference>
<dbReference type="Ensembl" id="ENSGALT00000151088">
    <property type="protein sequence ID" value="ENSGALP00000077700"/>
    <property type="gene ID" value="ENSGALG00000063719"/>
</dbReference>
<dbReference type="Ensembl" id="ENSGALT00000153218">
    <property type="protein sequence ID" value="ENSGALP00000075530"/>
    <property type="gene ID" value="ENSGALG00000063719"/>
</dbReference>
<dbReference type="Ensembl" id="ENSGALT00000155328">
    <property type="protein sequence ID" value="ENSGALP00000083957"/>
    <property type="gene ID" value="ENSGALG00000063719"/>
</dbReference>
<dbReference type="Ensembl" id="ENSGALT00010052461.1">
    <property type="protein sequence ID" value="ENSGALP00010031368.1"/>
    <property type="gene ID" value="ENSGALG00010021611.1"/>
</dbReference>
<dbReference type="Ensembl" id="ENSGALT00010052466.1">
    <property type="protein sequence ID" value="ENSGALP00010031373.1"/>
    <property type="gene ID" value="ENSGALG00010021611.1"/>
</dbReference>
<dbReference type="Ensembl" id="ENSGALT00010052469.1">
    <property type="protein sequence ID" value="ENSGALP00010031376.1"/>
    <property type="gene ID" value="ENSGALG00010021611.1"/>
</dbReference>
<dbReference type="GeneID" id="395826"/>
<dbReference type="KEGG" id="gga:395826"/>
<dbReference type="CTD" id="26585"/>
<dbReference type="VEuPathDB" id="HostDB:geneid_395826"/>
<dbReference type="eggNOG" id="ENOG502QQ5X">
    <property type="taxonomic scope" value="Eukaryota"/>
</dbReference>
<dbReference type="GeneTree" id="ENSGT00940000154209"/>
<dbReference type="HOGENOM" id="CLU_101024_0_0_1"/>
<dbReference type="InParanoid" id="O73755"/>
<dbReference type="OMA" id="PPDKDQY"/>
<dbReference type="OrthoDB" id="10061784at2759"/>
<dbReference type="PhylomeDB" id="O73755"/>
<dbReference type="TreeFam" id="TF106445"/>
<dbReference type="PRO" id="PR:O73755"/>
<dbReference type="Proteomes" id="UP000000539">
    <property type="component" value="Chromosome 5"/>
</dbReference>
<dbReference type="Bgee" id="ENSGALG00000009724">
    <property type="expression patterns" value="Expressed in colon and 6 other cell types or tissues"/>
</dbReference>
<dbReference type="GO" id="GO:0009986">
    <property type="term" value="C:cell surface"/>
    <property type="evidence" value="ECO:0007669"/>
    <property type="project" value="Ensembl"/>
</dbReference>
<dbReference type="GO" id="GO:0005615">
    <property type="term" value="C:extracellular space"/>
    <property type="evidence" value="ECO:0000318"/>
    <property type="project" value="GO_Central"/>
</dbReference>
<dbReference type="GO" id="GO:0036122">
    <property type="term" value="F:BMP binding"/>
    <property type="evidence" value="ECO:0000318"/>
    <property type="project" value="GO_Central"/>
</dbReference>
<dbReference type="GO" id="GO:0005125">
    <property type="term" value="F:cytokine activity"/>
    <property type="evidence" value="ECO:0007669"/>
    <property type="project" value="UniProtKB-KW"/>
</dbReference>
<dbReference type="GO" id="GO:0042803">
    <property type="term" value="F:protein homodimerization activity"/>
    <property type="evidence" value="ECO:0007669"/>
    <property type="project" value="Ensembl"/>
</dbReference>
<dbReference type="GO" id="GO:0048018">
    <property type="term" value="F:receptor ligand activity"/>
    <property type="evidence" value="ECO:0000318"/>
    <property type="project" value="GO_Central"/>
</dbReference>
<dbReference type="GO" id="GO:0030297">
    <property type="term" value="F:transmembrane receptor protein tyrosine kinase activator activity"/>
    <property type="evidence" value="ECO:0007669"/>
    <property type="project" value="Ensembl"/>
</dbReference>
<dbReference type="GO" id="GO:0043184">
    <property type="term" value="F:vascular endothelial growth factor receptor 2 binding"/>
    <property type="evidence" value="ECO:0007669"/>
    <property type="project" value="Ensembl"/>
</dbReference>
<dbReference type="GO" id="GO:0055007">
    <property type="term" value="P:cardiac muscle cell differentiation"/>
    <property type="evidence" value="ECO:0007669"/>
    <property type="project" value="Ensembl"/>
</dbReference>
<dbReference type="GO" id="GO:0060379">
    <property type="term" value="P:cardiac muscle cell myoblast differentiation"/>
    <property type="evidence" value="ECO:0007669"/>
    <property type="project" value="Ensembl"/>
</dbReference>
<dbReference type="GO" id="GO:0002042">
    <property type="term" value="P:cell migration involved in sprouting angiogenesis"/>
    <property type="evidence" value="ECO:0007669"/>
    <property type="project" value="Ensembl"/>
</dbReference>
<dbReference type="GO" id="GO:0000902">
    <property type="term" value="P:cell morphogenesis"/>
    <property type="evidence" value="ECO:0007669"/>
    <property type="project" value="Ensembl"/>
</dbReference>
<dbReference type="GO" id="GO:0007267">
    <property type="term" value="P:cell-cell signaling"/>
    <property type="evidence" value="ECO:0007669"/>
    <property type="project" value="Ensembl"/>
</dbReference>
<dbReference type="GO" id="GO:0030199">
    <property type="term" value="P:collagen fibril organization"/>
    <property type="evidence" value="ECO:0007669"/>
    <property type="project" value="Ensembl"/>
</dbReference>
<dbReference type="GO" id="GO:0048263">
    <property type="term" value="P:determination of dorsal identity"/>
    <property type="evidence" value="ECO:0007669"/>
    <property type="project" value="Ensembl"/>
</dbReference>
<dbReference type="GO" id="GO:0030326">
    <property type="term" value="P:embryonic limb morphogenesis"/>
    <property type="evidence" value="ECO:0007669"/>
    <property type="project" value="Ensembl"/>
</dbReference>
<dbReference type="GO" id="GO:0060173">
    <property type="term" value="P:limb development"/>
    <property type="evidence" value="ECO:0000250"/>
    <property type="project" value="AgBase"/>
</dbReference>
<dbReference type="GO" id="GO:0003337">
    <property type="term" value="P:mesenchymal to epithelial transition involved in metanephros morphogenesis"/>
    <property type="evidence" value="ECO:0007669"/>
    <property type="project" value="Ensembl"/>
</dbReference>
<dbReference type="GO" id="GO:0043066">
    <property type="term" value="P:negative regulation of apoptotic process"/>
    <property type="evidence" value="ECO:0000250"/>
    <property type="project" value="AgBase"/>
</dbReference>
<dbReference type="GO" id="GO:1900158">
    <property type="term" value="P:negative regulation of bone mineralization involved in bone maturation"/>
    <property type="evidence" value="ECO:0007669"/>
    <property type="project" value="Ensembl"/>
</dbReference>
<dbReference type="GO" id="GO:0046851">
    <property type="term" value="P:negative regulation of bone remodeling"/>
    <property type="evidence" value="ECO:0007669"/>
    <property type="project" value="Ensembl"/>
</dbReference>
<dbReference type="GO" id="GO:1900155">
    <property type="term" value="P:negative regulation of bone trabecula formation"/>
    <property type="evidence" value="ECO:0007669"/>
    <property type="project" value="Ensembl"/>
</dbReference>
<dbReference type="GO" id="GO:0090090">
    <property type="term" value="P:negative regulation of canonical Wnt signaling pathway"/>
    <property type="evidence" value="ECO:0007669"/>
    <property type="project" value="Ensembl"/>
</dbReference>
<dbReference type="GO" id="GO:0032331">
    <property type="term" value="P:negative regulation of chondrocyte differentiation"/>
    <property type="evidence" value="ECO:0000250"/>
    <property type="project" value="AgBase"/>
</dbReference>
<dbReference type="GO" id="GO:0045892">
    <property type="term" value="P:negative regulation of DNA-templated transcription"/>
    <property type="evidence" value="ECO:0007669"/>
    <property type="project" value="Ensembl"/>
</dbReference>
<dbReference type="GO" id="GO:0045668">
    <property type="term" value="P:negative regulation of osteoblast differentiation"/>
    <property type="evidence" value="ECO:0007669"/>
    <property type="project" value="Ensembl"/>
</dbReference>
<dbReference type="GO" id="GO:0033689">
    <property type="term" value="P:negative regulation of osteoblast proliferation"/>
    <property type="evidence" value="ECO:0007669"/>
    <property type="project" value="Ensembl"/>
</dbReference>
<dbReference type="GO" id="GO:0090291">
    <property type="term" value="P:negative regulation of osteoclast proliferation"/>
    <property type="evidence" value="ECO:0007669"/>
    <property type="project" value="Ensembl"/>
</dbReference>
<dbReference type="GO" id="GO:0060392">
    <property type="term" value="P:negative regulation of SMAD protein signal transduction"/>
    <property type="evidence" value="ECO:0007669"/>
    <property type="project" value="Ensembl"/>
</dbReference>
<dbReference type="GO" id="GO:0045766">
    <property type="term" value="P:positive regulation of angiogenesis"/>
    <property type="evidence" value="ECO:0007669"/>
    <property type="project" value="Ensembl"/>
</dbReference>
<dbReference type="GO" id="GO:0090190">
    <property type="term" value="P:positive regulation of branching involved in ureteric bud morphogenesis"/>
    <property type="evidence" value="ECO:0007669"/>
    <property type="project" value="Ensembl"/>
</dbReference>
<dbReference type="GO" id="GO:0008284">
    <property type="term" value="P:positive regulation of cell population proliferation"/>
    <property type="evidence" value="ECO:0007669"/>
    <property type="project" value="Ensembl"/>
</dbReference>
<dbReference type="GO" id="GO:1901224">
    <property type="term" value="P:positive regulation of non-canonical NF-kappaB signal transduction"/>
    <property type="evidence" value="ECO:0007669"/>
    <property type="project" value="Ensembl"/>
</dbReference>
<dbReference type="GO" id="GO:0002092">
    <property type="term" value="P:positive regulation of receptor internalization"/>
    <property type="evidence" value="ECO:0007669"/>
    <property type="project" value="Ensembl"/>
</dbReference>
<dbReference type="GO" id="GO:0045944">
    <property type="term" value="P:positive regulation of transcription by RNA polymerase II"/>
    <property type="evidence" value="ECO:0007669"/>
    <property type="project" value="Ensembl"/>
</dbReference>
<dbReference type="GO" id="GO:0009954">
    <property type="term" value="P:proximal/distal pattern formation"/>
    <property type="evidence" value="ECO:0007669"/>
    <property type="project" value="Ensembl"/>
</dbReference>
<dbReference type="GO" id="GO:0010717">
    <property type="term" value="P:regulation of epithelial to mesenchymal transition"/>
    <property type="evidence" value="ECO:0007669"/>
    <property type="project" value="Ensembl"/>
</dbReference>
<dbReference type="GO" id="GO:0051893">
    <property type="term" value="P:regulation of focal adhesion assembly"/>
    <property type="evidence" value="ECO:0007669"/>
    <property type="project" value="Ensembl"/>
</dbReference>
<dbReference type="GO" id="GO:0038098">
    <property type="term" value="P:sequestering of BMP from receptor via BMP binding"/>
    <property type="evidence" value="ECO:0000318"/>
    <property type="project" value="GO_Central"/>
</dbReference>
<dbReference type="GO" id="GO:0060676">
    <property type="term" value="P:ureteric bud formation"/>
    <property type="evidence" value="ECO:0007669"/>
    <property type="project" value="Ensembl"/>
</dbReference>
<dbReference type="FunFam" id="2.10.90.10:FF:000013">
    <property type="entry name" value="Gremlin"/>
    <property type="match status" value="1"/>
</dbReference>
<dbReference type="Gene3D" id="2.10.90.10">
    <property type="entry name" value="Cystine-knot cytokines"/>
    <property type="match status" value="1"/>
</dbReference>
<dbReference type="InterPro" id="IPR006207">
    <property type="entry name" value="Cys_knot_C"/>
</dbReference>
<dbReference type="InterPro" id="IPR029034">
    <property type="entry name" value="Cystine-knot_cytokine"/>
</dbReference>
<dbReference type="InterPro" id="IPR004133">
    <property type="entry name" value="DAN"/>
</dbReference>
<dbReference type="InterPro" id="IPR017159">
    <property type="entry name" value="Gremlin-1/2"/>
</dbReference>
<dbReference type="PANTHER" id="PTHR15283">
    <property type="entry name" value="GREMLIN 1"/>
    <property type="match status" value="1"/>
</dbReference>
<dbReference type="PANTHER" id="PTHR15283:SF3">
    <property type="entry name" value="GREMLIN-1"/>
    <property type="match status" value="1"/>
</dbReference>
<dbReference type="Pfam" id="PF03045">
    <property type="entry name" value="DAN"/>
    <property type="match status" value="1"/>
</dbReference>
<dbReference type="PIRSF" id="PIRSF037254">
    <property type="entry name" value="Gremlin_precursor"/>
    <property type="match status" value="1"/>
</dbReference>
<dbReference type="SMART" id="SM00041">
    <property type="entry name" value="CT"/>
    <property type="match status" value="1"/>
</dbReference>
<evidence type="ECO:0000250" key="1">
    <source>
        <dbReference type="UniProtKB" id="O60565"/>
    </source>
</evidence>
<evidence type="ECO:0000255" key="2"/>
<evidence type="ECO:0000256" key="3">
    <source>
        <dbReference type="SAM" id="MobiDB-lite"/>
    </source>
</evidence>
<evidence type="ECO:0000269" key="4">
    <source>
    </source>
</evidence>
<evidence type="ECO:0000305" key="5"/>
<reference key="1">
    <citation type="journal article" date="1998" name="Mol. Cell">
        <title>The Xenopus dorsalizing factor Gremlin identifies a novel family of secreted proteins that antagonize BMP activities.</title>
        <authorList>
            <person name="Hsu D.R."/>
            <person name="Economides A.N."/>
            <person name="Wang X."/>
            <person name="Eimon P.M."/>
            <person name="Harland R.M."/>
        </authorList>
    </citation>
    <scope>NUCLEOTIDE SEQUENCE [MRNA]</scope>
</reference>
<reference key="2">
    <citation type="journal article" date="2004" name="Dev. Dyn.">
        <title>Localized expression of drm/gremlin in the central nervous system of the chicken embryo.</title>
        <authorList>
            <person name="Huillard E."/>
            <person name="Marx M."/>
        </authorList>
    </citation>
    <scope>FUNCTION</scope>
    <scope>DEVELOPMENTAL STAGE</scope>
</reference>
<organism>
    <name type="scientific">Gallus gallus</name>
    <name type="common">Chicken</name>
    <dbReference type="NCBI Taxonomy" id="9031"/>
    <lineage>
        <taxon>Eukaryota</taxon>
        <taxon>Metazoa</taxon>
        <taxon>Chordata</taxon>
        <taxon>Craniata</taxon>
        <taxon>Vertebrata</taxon>
        <taxon>Euteleostomi</taxon>
        <taxon>Archelosauria</taxon>
        <taxon>Archosauria</taxon>
        <taxon>Dinosauria</taxon>
        <taxon>Saurischia</taxon>
        <taxon>Theropoda</taxon>
        <taxon>Coelurosauria</taxon>
        <taxon>Aves</taxon>
        <taxon>Neognathae</taxon>
        <taxon>Galloanserae</taxon>
        <taxon>Galliformes</taxon>
        <taxon>Phasianidae</taxon>
        <taxon>Phasianinae</taxon>
        <taxon>Gallus</taxon>
    </lineage>
</organism>
<sequence>MVRTLYAIGAVFLLTGFLLPTAEGRKRNRGSQGAIPPPDKDQPNDSEQMQTQQQSGSRHRERGKGTSMPAEEVLESSQEALHITERKYLKRDWCKTQPLKQTIHEEGCNSRTIINRFCYGQCNSFYIPRHVRKEEGSFQSCSFCKPKKFTTMTVTLNCPELQPPRKKKRITRVKECRCISIDLD</sequence>
<gene>
    <name type="primary">GREM1</name>
</gene>
<name>GREM1_CHICK</name>
<feature type="signal peptide" evidence="2">
    <location>
        <begin position="1"/>
        <end position="24"/>
    </location>
</feature>
<feature type="chain" id="PRO_0000006718" description="Gremlin-1">
    <location>
        <begin position="25"/>
        <end position="184"/>
    </location>
</feature>
<feature type="domain" description="CTCK">
    <location>
        <begin position="94"/>
        <end position="184"/>
    </location>
</feature>
<feature type="region of interest" description="Disordered" evidence="3">
    <location>
        <begin position="24"/>
        <end position="77"/>
    </location>
</feature>
<feature type="compositionally biased region" description="Polar residues" evidence="3">
    <location>
        <begin position="45"/>
        <end position="56"/>
    </location>
</feature>
<feature type="glycosylation site" description="N-linked (GlcNAc...) asparagine" evidence="2">
    <location>
        <position position="44"/>
    </location>
</feature>
<feature type="disulfide bond" evidence="1">
    <location>
        <begin position="94"/>
        <end position="144"/>
    </location>
</feature>
<feature type="disulfide bond" evidence="1">
    <location>
        <begin position="108"/>
        <end position="158"/>
    </location>
</feature>
<feature type="disulfide bond" evidence="1">
    <location>
        <begin position="118"/>
        <end position="176"/>
    </location>
</feature>
<feature type="disulfide bond" evidence="1">
    <location>
        <begin position="122"/>
        <end position="178"/>
    </location>
</feature>